<accession>Q1GEU6</accession>
<gene>
    <name evidence="1" type="primary">atpA</name>
    <name type="ordered locus">TM1040_2088</name>
</gene>
<sequence>MGIQAAEISAILKDQIKNFGQEAEVAEIGRVLSVGDGIARVYGLDNVQAGEMVEFPGGIMGMALNLESDNVGVVIFGSDRDIKEGDTVKRTNSIVDVPAGPELLGRVVDGLGNPLDGKGPIEAKERKVADVKAPGIIPRKSVHEPMATGLKSVDAMIPVGRGQRELIIGDRQTGKTAIALDTILNQKSYNDAAGDDDSKKLYCVYVAVGQKRSTVAQLVKKLEESGAMEYSIVVAATASDPAPMQFLAPYAATAMAEYFRDSGKHALIIYDDLSKQAVAYRQMSLLLRRPPGREAYPGDVFYLHSRLLERSAKLNEDFGAGSLTALPIIETQGGDVSAFIPTNVISITDGQIFLETELFYQGIRPAVNTGLSVSRVGSSAQTDAMSSVAGPVKLSLAQYREMAAFAQFGSDLDAATQQLLARGARLTELMKQPQYSPLTNSEIVCIIFAGTNGYLDKVDVKEVGRYEAELLTFLRSKKADFLQWITDEDPKFKKGEPVEKMKAVLDEFAADFA</sequence>
<name>ATPA_RUEST</name>
<keyword id="KW-0066">ATP synthesis</keyword>
<keyword id="KW-0067">ATP-binding</keyword>
<keyword id="KW-0997">Cell inner membrane</keyword>
<keyword id="KW-1003">Cell membrane</keyword>
<keyword id="KW-0139">CF(1)</keyword>
<keyword id="KW-0375">Hydrogen ion transport</keyword>
<keyword id="KW-0406">Ion transport</keyword>
<keyword id="KW-0472">Membrane</keyword>
<keyword id="KW-0547">Nucleotide-binding</keyword>
<keyword id="KW-1185">Reference proteome</keyword>
<keyword id="KW-1278">Translocase</keyword>
<keyword id="KW-0813">Transport</keyword>
<evidence type="ECO:0000255" key="1">
    <source>
        <dbReference type="HAMAP-Rule" id="MF_01346"/>
    </source>
</evidence>
<reference key="1">
    <citation type="submission" date="2006-05" db="EMBL/GenBank/DDBJ databases">
        <title>Complete sequence of chromosome of Silicibacter sp. TM1040.</title>
        <authorList>
            <consortium name="US DOE Joint Genome Institute"/>
            <person name="Copeland A."/>
            <person name="Lucas S."/>
            <person name="Lapidus A."/>
            <person name="Barry K."/>
            <person name="Detter J.C."/>
            <person name="Glavina del Rio T."/>
            <person name="Hammon N."/>
            <person name="Israni S."/>
            <person name="Dalin E."/>
            <person name="Tice H."/>
            <person name="Pitluck S."/>
            <person name="Brettin T."/>
            <person name="Bruce D."/>
            <person name="Han C."/>
            <person name="Tapia R."/>
            <person name="Goodwin L."/>
            <person name="Thompson L.S."/>
            <person name="Gilna P."/>
            <person name="Schmutz J."/>
            <person name="Larimer F."/>
            <person name="Land M."/>
            <person name="Hauser L."/>
            <person name="Kyrpides N."/>
            <person name="Kim E."/>
            <person name="Belas R."/>
            <person name="Moran M.A."/>
            <person name="Buchan A."/>
            <person name="Gonzalez J.M."/>
            <person name="Schell M.A."/>
            <person name="Sun F."/>
            <person name="Richardson P."/>
        </authorList>
    </citation>
    <scope>NUCLEOTIDE SEQUENCE [LARGE SCALE GENOMIC DNA]</scope>
    <source>
        <strain>TM1040</strain>
    </source>
</reference>
<proteinExistence type="inferred from homology"/>
<feature type="chain" id="PRO_0000256112" description="ATP synthase subunit alpha">
    <location>
        <begin position="1"/>
        <end position="513"/>
    </location>
</feature>
<feature type="binding site" evidence="1">
    <location>
        <begin position="169"/>
        <end position="176"/>
    </location>
    <ligand>
        <name>ATP</name>
        <dbReference type="ChEBI" id="CHEBI:30616"/>
    </ligand>
</feature>
<feature type="site" description="Required for activity" evidence="1">
    <location>
        <position position="372"/>
    </location>
</feature>
<dbReference type="EC" id="7.1.2.2" evidence="1"/>
<dbReference type="EMBL" id="CP000377">
    <property type="protein sequence ID" value="ABF64820.1"/>
    <property type="molecule type" value="Genomic_DNA"/>
</dbReference>
<dbReference type="RefSeq" id="WP_011539412.1">
    <property type="nucleotide sequence ID" value="NC_008044.1"/>
</dbReference>
<dbReference type="SMR" id="Q1GEU6"/>
<dbReference type="STRING" id="292414.TM1040_2088"/>
<dbReference type="KEGG" id="sit:TM1040_2088"/>
<dbReference type="eggNOG" id="COG0056">
    <property type="taxonomic scope" value="Bacteria"/>
</dbReference>
<dbReference type="HOGENOM" id="CLU_010091_2_1_5"/>
<dbReference type="OrthoDB" id="9803053at2"/>
<dbReference type="Proteomes" id="UP000000636">
    <property type="component" value="Chromosome"/>
</dbReference>
<dbReference type="GO" id="GO:0005886">
    <property type="term" value="C:plasma membrane"/>
    <property type="evidence" value="ECO:0007669"/>
    <property type="project" value="UniProtKB-SubCell"/>
</dbReference>
<dbReference type="GO" id="GO:0045259">
    <property type="term" value="C:proton-transporting ATP synthase complex"/>
    <property type="evidence" value="ECO:0007669"/>
    <property type="project" value="UniProtKB-KW"/>
</dbReference>
<dbReference type="GO" id="GO:0043531">
    <property type="term" value="F:ADP binding"/>
    <property type="evidence" value="ECO:0007669"/>
    <property type="project" value="TreeGrafter"/>
</dbReference>
<dbReference type="GO" id="GO:0005524">
    <property type="term" value="F:ATP binding"/>
    <property type="evidence" value="ECO:0007669"/>
    <property type="project" value="UniProtKB-UniRule"/>
</dbReference>
<dbReference type="GO" id="GO:0046933">
    <property type="term" value="F:proton-transporting ATP synthase activity, rotational mechanism"/>
    <property type="evidence" value="ECO:0007669"/>
    <property type="project" value="UniProtKB-UniRule"/>
</dbReference>
<dbReference type="CDD" id="cd18113">
    <property type="entry name" value="ATP-synt_F1_alpha_C"/>
    <property type="match status" value="1"/>
</dbReference>
<dbReference type="CDD" id="cd18116">
    <property type="entry name" value="ATP-synt_F1_alpha_N"/>
    <property type="match status" value="1"/>
</dbReference>
<dbReference type="CDD" id="cd01132">
    <property type="entry name" value="F1-ATPase_alpha_CD"/>
    <property type="match status" value="1"/>
</dbReference>
<dbReference type="FunFam" id="1.20.150.20:FF:000001">
    <property type="entry name" value="ATP synthase subunit alpha"/>
    <property type="match status" value="1"/>
</dbReference>
<dbReference type="FunFam" id="2.40.30.20:FF:000001">
    <property type="entry name" value="ATP synthase subunit alpha"/>
    <property type="match status" value="1"/>
</dbReference>
<dbReference type="FunFam" id="3.40.50.300:FF:002432">
    <property type="entry name" value="ATP synthase subunit alpha, mitochondrial"/>
    <property type="match status" value="1"/>
</dbReference>
<dbReference type="Gene3D" id="2.40.30.20">
    <property type="match status" value="1"/>
</dbReference>
<dbReference type="Gene3D" id="1.20.150.20">
    <property type="entry name" value="ATP synthase alpha/beta chain, C-terminal domain"/>
    <property type="match status" value="1"/>
</dbReference>
<dbReference type="Gene3D" id="3.40.50.300">
    <property type="entry name" value="P-loop containing nucleotide triphosphate hydrolases"/>
    <property type="match status" value="1"/>
</dbReference>
<dbReference type="HAMAP" id="MF_01346">
    <property type="entry name" value="ATP_synth_alpha_bact"/>
    <property type="match status" value="1"/>
</dbReference>
<dbReference type="InterPro" id="IPR023366">
    <property type="entry name" value="ATP_synth_asu-like_sf"/>
</dbReference>
<dbReference type="InterPro" id="IPR000793">
    <property type="entry name" value="ATP_synth_asu_C"/>
</dbReference>
<dbReference type="InterPro" id="IPR038376">
    <property type="entry name" value="ATP_synth_asu_C_sf"/>
</dbReference>
<dbReference type="InterPro" id="IPR033732">
    <property type="entry name" value="ATP_synth_F1_a_nt-bd_dom"/>
</dbReference>
<dbReference type="InterPro" id="IPR005294">
    <property type="entry name" value="ATP_synth_F1_asu"/>
</dbReference>
<dbReference type="InterPro" id="IPR020003">
    <property type="entry name" value="ATPase_a/bsu_AS"/>
</dbReference>
<dbReference type="InterPro" id="IPR004100">
    <property type="entry name" value="ATPase_F1/V1/A1_a/bsu_N"/>
</dbReference>
<dbReference type="InterPro" id="IPR036121">
    <property type="entry name" value="ATPase_F1/V1/A1_a/bsu_N_sf"/>
</dbReference>
<dbReference type="InterPro" id="IPR000194">
    <property type="entry name" value="ATPase_F1/V1/A1_a/bsu_nucl-bd"/>
</dbReference>
<dbReference type="InterPro" id="IPR027417">
    <property type="entry name" value="P-loop_NTPase"/>
</dbReference>
<dbReference type="NCBIfam" id="TIGR00962">
    <property type="entry name" value="atpA"/>
    <property type="match status" value="1"/>
</dbReference>
<dbReference type="NCBIfam" id="NF009884">
    <property type="entry name" value="PRK13343.1"/>
    <property type="match status" value="1"/>
</dbReference>
<dbReference type="PANTHER" id="PTHR48082">
    <property type="entry name" value="ATP SYNTHASE SUBUNIT ALPHA, MITOCHONDRIAL"/>
    <property type="match status" value="1"/>
</dbReference>
<dbReference type="PANTHER" id="PTHR48082:SF2">
    <property type="entry name" value="ATP SYNTHASE SUBUNIT ALPHA, MITOCHONDRIAL"/>
    <property type="match status" value="1"/>
</dbReference>
<dbReference type="Pfam" id="PF00006">
    <property type="entry name" value="ATP-synt_ab"/>
    <property type="match status" value="1"/>
</dbReference>
<dbReference type="Pfam" id="PF00306">
    <property type="entry name" value="ATP-synt_ab_C"/>
    <property type="match status" value="1"/>
</dbReference>
<dbReference type="Pfam" id="PF02874">
    <property type="entry name" value="ATP-synt_ab_N"/>
    <property type="match status" value="1"/>
</dbReference>
<dbReference type="PIRSF" id="PIRSF039088">
    <property type="entry name" value="F_ATPase_subunit_alpha"/>
    <property type="match status" value="1"/>
</dbReference>
<dbReference type="SUPFAM" id="SSF47917">
    <property type="entry name" value="C-terminal domain of alpha and beta subunits of F1 ATP synthase"/>
    <property type="match status" value="1"/>
</dbReference>
<dbReference type="SUPFAM" id="SSF50615">
    <property type="entry name" value="N-terminal domain of alpha and beta subunits of F1 ATP synthase"/>
    <property type="match status" value="1"/>
</dbReference>
<dbReference type="SUPFAM" id="SSF52540">
    <property type="entry name" value="P-loop containing nucleoside triphosphate hydrolases"/>
    <property type="match status" value="1"/>
</dbReference>
<dbReference type="PROSITE" id="PS00152">
    <property type="entry name" value="ATPASE_ALPHA_BETA"/>
    <property type="match status" value="1"/>
</dbReference>
<protein>
    <recommendedName>
        <fullName evidence="1">ATP synthase subunit alpha</fullName>
        <ecNumber evidence="1">7.1.2.2</ecNumber>
    </recommendedName>
    <alternativeName>
        <fullName evidence="1">ATP synthase F1 sector subunit alpha</fullName>
    </alternativeName>
    <alternativeName>
        <fullName evidence="1">F-ATPase subunit alpha</fullName>
    </alternativeName>
</protein>
<organism>
    <name type="scientific">Ruegeria sp. (strain TM1040)</name>
    <name type="common">Silicibacter sp.</name>
    <dbReference type="NCBI Taxonomy" id="292414"/>
    <lineage>
        <taxon>Bacteria</taxon>
        <taxon>Pseudomonadati</taxon>
        <taxon>Pseudomonadota</taxon>
        <taxon>Alphaproteobacteria</taxon>
        <taxon>Rhodobacterales</taxon>
        <taxon>Roseobacteraceae</taxon>
        <taxon>Ruegeria</taxon>
    </lineage>
</organism>
<comment type="function">
    <text evidence="1">Produces ATP from ADP in the presence of a proton gradient across the membrane. The alpha chain is a regulatory subunit.</text>
</comment>
<comment type="catalytic activity">
    <reaction evidence="1">
        <text>ATP + H2O + 4 H(+)(in) = ADP + phosphate + 5 H(+)(out)</text>
        <dbReference type="Rhea" id="RHEA:57720"/>
        <dbReference type="ChEBI" id="CHEBI:15377"/>
        <dbReference type="ChEBI" id="CHEBI:15378"/>
        <dbReference type="ChEBI" id="CHEBI:30616"/>
        <dbReference type="ChEBI" id="CHEBI:43474"/>
        <dbReference type="ChEBI" id="CHEBI:456216"/>
        <dbReference type="EC" id="7.1.2.2"/>
    </reaction>
</comment>
<comment type="subunit">
    <text evidence="1">F-type ATPases have 2 components, CF(1) - the catalytic core - and CF(0) - the membrane proton channel. CF(1) has five subunits: alpha(3), beta(3), gamma(1), delta(1), epsilon(1). CF(0) has three main subunits: a(1), b(2) and c(9-12). The alpha and beta chains form an alternating ring which encloses part of the gamma chain. CF(1) is attached to CF(0) by a central stalk formed by the gamma and epsilon chains, while a peripheral stalk is formed by the delta and b chains.</text>
</comment>
<comment type="subcellular location">
    <subcellularLocation>
        <location evidence="1">Cell inner membrane</location>
        <topology evidence="1">Peripheral membrane protein</topology>
    </subcellularLocation>
</comment>
<comment type="similarity">
    <text evidence="1">Belongs to the ATPase alpha/beta chains family.</text>
</comment>